<organismHost>
    <name type="scientific">Canna</name>
    <dbReference type="NCBI Taxonomy" id="4627"/>
</organismHost>
<organismHost>
    <name type="scientific">Chrysanthemum morifolium</name>
    <name type="common">Florist's daisy</name>
    <name type="synonym">Dendranthema grandiflorum</name>
    <dbReference type="NCBI Taxonomy" id="41568"/>
</organismHost>
<organismHost>
    <name type="scientific">Lilium</name>
    <dbReference type="NCBI Taxonomy" id="4688"/>
</organismHost>
<organismHost>
    <name type="scientific">Solanum lycopersicum</name>
    <name type="common">Tomato</name>
    <name type="synonym">Lycopersicon esculentum</name>
    <dbReference type="NCBI Taxonomy" id="4081"/>
</organismHost>
<keyword id="KW-0547">Nucleotide-binding</keyword>
<keyword id="KW-0548">Nucleotidyltransferase</keyword>
<keyword id="KW-1185">Reference proteome</keyword>
<keyword id="KW-0696">RNA-directed RNA polymerase</keyword>
<keyword id="KW-0808">Transferase</keyword>
<keyword id="KW-0693">Viral RNA replication</keyword>
<accession>P29035</accession>
<dbReference type="EC" id="2.7.7.48"/>
<dbReference type="EMBL" id="D10663">
    <property type="protein sequence ID" value="BAA01514.1"/>
    <property type="molecule type" value="Genomic_RNA"/>
</dbReference>
<dbReference type="RefSeq" id="NP_620761.1">
    <property type="nucleotide sequence ID" value="NC_003838.1"/>
</dbReference>
<dbReference type="KEGG" id="vg:962653"/>
<dbReference type="OrthoDB" id="1928at10239"/>
<dbReference type="Proteomes" id="UP000007399">
    <property type="component" value="Genome"/>
</dbReference>
<dbReference type="GO" id="GO:0000166">
    <property type="term" value="F:nucleotide binding"/>
    <property type="evidence" value="ECO:0007669"/>
    <property type="project" value="UniProtKB-KW"/>
</dbReference>
<dbReference type="GO" id="GO:0003723">
    <property type="term" value="F:RNA binding"/>
    <property type="evidence" value="ECO:0007669"/>
    <property type="project" value="InterPro"/>
</dbReference>
<dbReference type="GO" id="GO:0003968">
    <property type="term" value="F:RNA-directed RNA polymerase activity"/>
    <property type="evidence" value="ECO:0007669"/>
    <property type="project" value="UniProtKB-KW"/>
</dbReference>
<dbReference type="GO" id="GO:0006351">
    <property type="term" value="P:DNA-templated transcription"/>
    <property type="evidence" value="ECO:0007669"/>
    <property type="project" value="InterPro"/>
</dbReference>
<dbReference type="GO" id="GO:0039690">
    <property type="term" value="P:positive stranded viral RNA replication"/>
    <property type="evidence" value="ECO:0007669"/>
    <property type="project" value="InterPro"/>
</dbReference>
<dbReference type="CDD" id="cd23252">
    <property type="entry name" value="Bromoviridae_RdRp"/>
    <property type="match status" value="1"/>
</dbReference>
<dbReference type="InterPro" id="IPR047309">
    <property type="entry name" value="Bromoviridae_RdRp"/>
</dbReference>
<dbReference type="InterPro" id="IPR043502">
    <property type="entry name" value="DNA/RNA_pol_sf"/>
</dbReference>
<dbReference type="InterPro" id="IPR001788">
    <property type="entry name" value="RNA-dep_RNA_pol_alsuvir"/>
</dbReference>
<dbReference type="InterPro" id="IPR007094">
    <property type="entry name" value="RNA-dir_pol_PSvirus"/>
</dbReference>
<dbReference type="Pfam" id="PF00978">
    <property type="entry name" value="RdRP_2"/>
    <property type="match status" value="1"/>
</dbReference>
<dbReference type="SUPFAM" id="SSF56672">
    <property type="entry name" value="DNA/RNA polymerases"/>
    <property type="match status" value="1"/>
</dbReference>
<dbReference type="PROSITE" id="PS50507">
    <property type="entry name" value="RDRP_SSRNA_POS"/>
    <property type="match status" value="1"/>
</dbReference>
<sequence>MSTFSLENCLNGSYGVDTPEEVTFIRRRDANPSAFHGEETVPSNTTEVHSESVSYSSDFEGYSCDSDFTGDNQYSSFDGADSLLLSYDIDEYIDLSESELRVLFDEMVQPIHFGMVLSPTFSRNRFLSCLSLAKSVVVAPLYDPERTLRPFPELVKNLYSGVHDIYLSDSEEAAISSVTDTIEGYTFSPRDVVDNYEPPPLCSVCGLIAYQCPHYDINSLRKNCAEMTIAHDYPIEGLCGLIDDATLLKNLGSFLLPIQCEYTKLPEPTLITPPELTRPTDRVTVDLLQAICDSTLPTHVCYDDTYHQTFIENADYSVDIDRVRLKQSDLLAKVIDEGHLKPVLNTGSGQKRIGTTREVLCAIKKRNADVPELCGSVNLKRLSDDVAECFMLSFMNGDKLCSSNFINIVSDFHAYMSKWQSVLSYDDLPDLNAENLQFYEHMVKSDVKPSVTDTLNIDRPLPATITFHRKQLTSQFSPLFTALFQRFQRCLTKRVILPVGKISSLEIKDFSVLNKFCLEIDLSKFDKSQGELHLMIQEGILNRLGCPVHISKWWCDFHRMSYIKDKRAGVSMPISFQRRTGDAFTYFGNTLVTMSMFAWCYDTSQFDKLIFSGDDSLGFSIKAPVGDPSLFTSLFNMEAKVMEPSVPYICSKFLLTDDFGNTFSVPDPLREIQRLGSKKIPLDEDDRSLHAHFMSFVDRLKFLNHMNQTSMTQLSLFYEMKYRKSGDDILLVLGAFNKYTANFNAYKELYYSEKQQCALINSFSISDLIVGRGKSSKASRRKAVESNGKHRDPSTRDHSKVGTDESKETSTEETTQTEPQGAGSQKSK</sequence>
<evidence type="ECO:0000250" key="1"/>
<evidence type="ECO:0000255" key="2">
    <source>
        <dbReference type="PROSITE-ProRule" id="PRU00539"/>
    </source>
</evidence>
<evidence type="ECO:0000256" key="3">
    <source>
        <dbReference type="SAM" id="MobiDB-lite"/>
    </source>
</evidence>
<evidence type="ECO:0000305" key="4"/>
<comment type="function">
    <text evidence="4">RNA-dependent RNA polymerase which replicates the viral genome composed of 3 RNA segments, RNA1, RNA2 and RNA3.</text>
</comment>
<comment type="catalytic activity">
    <reaction evidence="2">
        <text>RNA(n) + a ribonucleoside 5'-triphosphate = RNA(n+1) + diphosphate</text>
        <dbReference type="Rhea" id="RHEA:21248"/>
        <dbReference type="Rhea" id="RHEA-COMP:14527"/>
        <dbReference type="Rhea" id="RHEA-COMP:17342"/>
        <dbReference type="ChEBI" id="CHEBI:33019"/>
        <dbReference type="ChEBI" id="CHEBI:61557"/>
        <dbReference type="ChEBI" id="CHEBI:140395"/>
        <dbReference type="EC" id="2.7.7.48"/>
    </reaction>
</comment>
<comment type="subunit">
    <text evidence="1">Interacts with replication protein 1a.</text>
</comment>
<comment type="similarity">
    <text evidence="4">Belongs to the ssRNA positive-strand viruses RNA-directed RNA polymerase family.</text>
</comment>
<proteinExistence type="inferred from homology"/>
<reference key="1">
    <citation type="journal article" date="1991" name="J. Gen. Virol.">
        <title>Nucleotide sequence of tomato aspermy virus RNA 2.</title>
        <authorList>
            <person name="Moriones E."/>
            <person name="Roossinck M.J."/>
            <person name="Garcia-Arenal F."/>
        </authorList>
    </citation>
    <scope>NUCLEOTIDE SEQUENCE [GENOMIC RNA]</scope>
</reference>
<feature type="chain" id="PRO_0000083283" description="RNA-directed RNA polymerase 2a">
    <location>
        <begin position="1"/>
        <end position="828"/>
    </location>
</feature>
<feature type="domain" description="RdRp catalytic" evidence="2">
    <location>
        <begin position="515"/>
        <end position="628"/>
    </location>
</feature>
<feature type="region of interest" description="Disordered" evidence="3">
    <location>
        <begin position="776"/>
        <end position="828"/>
    </location>
</feature>
<feature type="compositionally biased region" description="Basic and acidic residues" evidence="3">
    <location>
        <begin position="782"/>
        <end position="810"/>
    </location>
</feature>
<protein>
    <recommendedName>
        <fullName>RNA-directed RNA polymerase 2a</fullName>
        <shortName>protein 2a</shortName>
        <ecNumber>2.7.7.48</ecNumber>
    </recommendedName>
</protein>
<name>RDRP_TAV</name>
<gene>
    <name type="ORF">ORF2a</name>
</gene>
<organism>
    <name type="scientific">Tomato aspermy virus</name>
    <name type="common">TAV</name>
    <dbReference type="NCBI Taxonomy" id="12315"/>
    <lineage>
        <taxon>Viruses</taxon>
        <taxon>Riboviria</taxon>
        <taxon>Orthornavirae</taxon>
        <taxon>Kitrinoviricota</taxon>
        <taxon>Alsuviricetes</taxon>
        <taxon>Martellivirales</taxon>
        <taxon>Bromoviridae</taxon>
        <taxon>Cucumovirus</taxon>
    </lineage>
</organism>